<accession>Q9ZCN6</accession>
<gene>
    <name evidence="1" type="primary">valS</name>
    <name type="ordered locus">RP687</name>
</gene>
<comment type="function">
    <text evidence="1">Catalyzes the attachment of valine to tRNA(Val). As ValRS can inadvertently accommodate and process structurally similar amino acids such as threonine, to avoid such errors, it has a 'posttransfer' editing activity that hydrolyzes mischarged Thr-tRNA(Val) in a tRNA-dependent manner.</text>
</comment>
<comment type="catalytic activity">
    <reaction evidence="1">
        <text>tRNA(Val) + L-valine + ATP = L-valyl-tRNA(Val) + AMP + diphosphate</text>
        <dbReference type="Rhea" id="RHEA:10704"/>
        <dbReference type="Rhea" id="RHEA-COMP:9672"/>
        <dbReference type="Rhea" id="RHEA-COMP:9708"/>
        <dbReference type="ChEBI" id="CHEBI:30616"/>
        <dbReference type="ChEBI" id="CHEBI:33019"/>
        <dbReference type="ChEBI" id="CHEBI:57762"/>
        <dbReference type="ChEBI" id="CHEBI:78442"/>
        <dbReference type="ChEBI" id="CHEBI:78537"/>
        <dbReference type="ChEBI" id="CHEBI:456215"/>
        <dbReference type="EC" id="6.1.1.9"/>
    </reaction>
</comment>
<comment type="subunit">
    <text evidence="1">Monomer.</text>
</comment>
<comment type="subcellular location">
    <subcellularLocation>
        <location evidence="1">Cytoplasm</location>
    </subcellularLocation>
</comment>
<comment type="domain">
    <text evidence="1">ValRS has two distinct active sites: one for aminoacylation and one for editing. The misactivated threonine is translocated from the active site to the editing site.</text>
</comment>
<comment type="similarity">
    <text evidence="1">Belongs to the class-I aminoacyl-tRNA synthetase family. ValS type 2 subfamily.</text>
</comment>
<proteinExistence type="inferred from homology"/>
<evidence type="ECO:0000255" key="1">
    <source>
        <dbReference type="HAMAP-Rule" id="MF_02005"/>
    </source>
</evidence>
<feature type="chain" id="PRO_0000106246" description="Valine--tRNA ligase">
    <location>
        <begin position="1"/>
        <end position="814"/>
    </location>
</feature>
<feature type="short sequence motif" description="'HIGH' region">
    <location>
        <begin position="46"/>
        <end position="56"/>
    </location>
</feature>
<feature type="short sequence motif" description="'KMSKS' region">
    <location>
        <begin position="536"/>
        <end position="540"/>
    </location>
</feature>
<feature type="binding site" evidence="1">
    <location>
        <position position="539"/>
    </location>
    <ligand>
        <name>ATP</name>
        <dbReference type="ChEBI" id="CHEBI:30616"/>
    </ligand>
</feature>
<name>SYV_RICPR</name>
<sequence length="814" mass="94516">MKEFPKHYNFTENEKKWQNIWQELQIYAYDPNISKAEIYIVDTPPPTVSGQLHIGHIYSYTQTDFIVRFQRMIGKNIFYPIGFDDNGLPTERLVEKQKQIKAYNMERDEFIKICLEVVKNEEAKFRSLFKQIALSVDWSLEYQTISPLSRKISQMSFLDLLHKGEVYRANQPILWDTVDGTALAQADIEDKQKISSMNYITFKTEQGDQLTIATTRPELLPACVAVFYHPDDVRYKHLADKSAITPLFNEKVPILADPLVQQDKGTGLVMCCTFGDQTDITWWKSHNLPLKTIITKKGTINFPHKLDIDGLTIKEARTKIIDILKEQSLLTKQEEIIQTVKCAERSGAPLEILTVTQWFIKTITHKEALLKRTNELNWYPKNMKMRLENWINSLSWDWCISRQRYFGVPFPIWYSKRIGEEGKILYADISQLPVDPLKDLPIGYSKEEVDPDLDVMDTWATSSVSPQLSTYGISEDLAINKVRHDKLFPMDLRPQAHEIIRTWAFYTILKSHLHQNILPWKNIMVSGWCLAEDRSKMSKSKGNVLVPEKLLERYGADVIRYWSANSKLGADTAYSEDVMKNGKRLVNKLWNAAKFVSIHFDKLTSEDKKVSLFDIKEKITNEFDQWMINKLVALVKLATNALQNYEYANAIYLTEKFFWSIFCDNYLEISKTRSYDEANKNPQGQYSSILTLYHIMQTLLKLFAPFMPHITEELYQILYNKNSIHMQGNWINYGDLNYEIDVQGPEGLLEILDIVRKFKAEYNLSIKAPIKLLEVSGIVLSTELVEDLKNVTSAEEIQFKAKDDQIKVNIKLFV</sequence>
<protein>
    <recommendedName>
        <fullName evidence="1">Valine--tRNA ligase</fullName>
        <ecNumber evidence="1">6.1.1.9</ecNumber>
    </recommendedName>
    <alternativeName>
        <fullName evidence="1">Valyl-tRNA synthetase</fullName>
        <shortName evidence="1">ValRS</shortName>
    </alternativeName>
</protein>
<reference key="1">
    <citation type="journal article" date="1998" name="Nature">
        <title>The genome sequence of Rickettsia prowazekii and the origin of mitochondria.</title>
        <authorList>
            <person name="Andersson S.G.E."/>
            <person name="Zomorodipour A."/>
            <person name="Andersson J.O."/>
            <person name="Sicheritz-Ponten T."/>
            <person name="Alsmark U.C.M."/>
            <person name="Podowski R.M."/>
            <person name="Naeslund A.K."/>
            <person name="Eriksson A.-S."/>
            <person name="Winkler H.H."/>
            <person name="Kurland C.G."/>
        </authorList>
    </citation>
    <scope>NUCLEOTIDE SEQUENCE [LARGE SCALE GENOMIC DNA]</scope>
    <source>
        <strain>Madrid E</strain>
    </source>
</reference>
<keyword id="KW-0030">Aminoacyl-tRNA synthetase</keyword>
<keyword id="KW-0067">ATP-binding</keyword>
<keyword id="KW-0963">Cytoplasm</keyword>
<keyword id="KW-0436">Ligase</keyword>
<keyword id="KW-0547">Nucleotide-binding</keyword>
<keyword id="KW-0648">Protein biosynthesis</keyword>
<keyword id="KW-1185">Reference proteome</keyword>
<organism>
    <name type="scientific">Rickettsia prowazekii (strain Madrid E)</name>
    <dbReference type="NCBI Taxonomy" id="272947"/>
    <lineage>
        <taxon>Bacteria</taxon>
        <taxon>Pseudomonadati</taxon>
        <taxon>Pseudomonadota</taxon>
        <taxon>Alphaproteobacteria</taxon>
        <taxon>Rickettsiales</taxon>
        <taxon>Rickettsiaceae</taxon>
        <taxon>Rickettsieae</taxon>
        <taxon>Rickettsia</taxon>
        <taxon>typhus group</taxon>
    </lineage>
</organism>
<dbReference type="EC" id="6.1.1.9" evidence="1"/>
<dbReference type="EMBL" id="AJ235272">
    <property type="protein sequence ID" value="CAA15124.1"/>
    <property type="molecule type" value="Genomic_DNA"/>
</dbReference>
<dbReference type="PIR" id="B71675">
    <property type="entry name" value="B71675"/>
</dbReference>
<dbReference type="RefSeq" id="NP_221048.1">
    <property type="nucleotide sequence ID" value="NC_000963.1"/>
</dbReference>
<dbReference type="RefSeq" id="WP_004599517.1">
    <property type="nucleotide sequence ID" value="NC_000963.1"/>
</dbReference>
<dbReference type="SMR" id="Q9ZCN6"/>
<dbReference type="STRING" id="272947.gene:17555764"/>
<dbReference type="EnsemblBacteria" id="CAA15124">
    <property type="protein sequence ID" value="CAA15124"/>
    <property type="gene ID" value="CAA15124"/>
</dbReference>
<dbReference type="KEGG" id="rpr:RP687"/>
<dbReference type="PATRIC" id="fig|272947.5.peg.709"/>
<dbReference type="eggNOG" id="COG0525">
    <property type="taxonomic scope" value="Bacteria"/>
</dbReference>
<dbReference type="HOGENOM" id="CLU_001493_0_2_5"/>
<dbReference type="OrthoDB" id="9810365at2"/>
<dbReference type="Proteomes" id="UP000002480">
    <property type="component" value="Chromosome"/>
</dbReference>
<dbReference type="GO" id="GO:0005829">
    <property type="term" value="C:cytosol"/>
    <property type="evidence" value="ECO:0007669"/>
    <property type="project" value="TreeGrafter"/>
</dbReference>
<dbReference type="GO" id="GO:0002161">
    <property type="term" value="F:aminoacyl-tRNA deacylase activity"/>
    <property type="evidence" value="ECO:0007669"/>
    <property type="project" value="InterPro"/>
</dbReference>
<dbReference type="GO" id="GO:0005524">
    <property type="term" value="F:ATP binding"/>
    <property type="evidence" value="ECO:0007669"/>
    <property type="project" value="UniProtKB-UniRule"/>
</dbReference>
<dbReference type="GO" id="GO:0004832">
    <property type="term" value="F:valine-tRNA ligase activity"/>
    <property type="evidence" value="ECO:0007669"/>
    <property type="project" value="UniProtKB-UniRule"/>
</dbReference>
<dbReference type="GO" id="GO:0006438">
    <property type="term" value="P:valyl-tRNA aminoacylation"/>
    <property type="evidence" value="ECO:0007669"/>
    <property type="project" value="UniProtKB-UniRule"/>
</dbReference>
<dbReference type="CDD" id="cd07962">
    <property type="entry name" value="Anticodon_Ia_Val"/>
    <property type="match status" value="1"/>
</dbReference>
<dbReference type="CDD" id="cd00817">
    <property type="entry name" value="ValRS_core"/>
    <property type="match status" value="1"/>
</dbReference>
<dbReference type="FunFam" id="1.10.730.10:FF:000033">
    <property type="entry name" value="Valine--tRNA ligase"/>
    <property type="match status" value="1"/>
</dbReference>
<dbReference type="FunFam" id="3.40.50.620:FF:000192">
    <property type="entry name" value="Valine--tRNA ligase"/>
    <property type="match status" value="1"/>
</dbReference>
<dbReference type="Gene3D" id="3.40.50.620">
    <property type="entry name" value="HUPs"/>
    <property type="match status" value="2"/>
</dbReference>
<dbReference type="Gene3D" id="1.10.730.10">
    <property type="entry name" value="Isoleucyl-tRNA Synthetase, Domain 1"/>
    <property type="match status" value="1"/>
</dbReference>
<dbReference type="HAMAP" id="MF_02005">
    <property type="entry name" value="Val_tRNA_synth_type2"/>
    <property type="match status" value="1"/>
</dbReference>
<dbReference type="InterPro" id="IPR001412">
    <property type="entry name" value="aa-tRNA-synth_I_CS"/>
</dbReference>
<dbReference type="InterPro" id="IPR002300">
    <property type="entry name" value="aa-tRNA-synth_Ia"/>
</dbReference>
<dbReference type="InterPro" id="IPR033705">
    <property type="entry name" value="Anticodon_Ia_Val"/>
</dbReference>
<dbReference type="InterPro" id="IPR013155">
    <property type="entry name" value="M/V/L/I-tRNA-synth_anticd-bd"/>
</dbReference>
<dbReference type="InterPro" id="IPR014729">
    <property type="entry name" value="Rossmann-like_a/b/a_fold"/>
</dbReference>
<dbReference type="InterPro" id="IPR009080">
    <property type="entry name" value="tRNAsynth_Ia_anticodon-bd"/>
</dbReference>
<dbReference type="InterPro" id="IPR009008">
    <property type="entry name" value="Val/Leu/Ile-tRNA-synth_edit"/>
</dbReference>
<dbReference type="InterPro" id="IPR022874">
    <property type="entry name" value="Valine-tRNA_ligase_type_2"/>
</dbReference>
<dbReference type="InterPro" id="IPR002303">
    <property type="entry name" value="Valyl-tRNA_ligase"/>
</dbReference>
<dbReference type="NCBIfam" id="NF009687">
    <property type="entry name" value="PRK13208.1"/>
    <property type="match status" value="1"/>
</dbReference>
<dbReference type="NCBIfam" id="TIGR00422">
    <property type="entry name" value="valS"/>
    <property type="match status" value="1"/>
</dbReference>
<dbReference type="PANTHER" id="PTHR11946:SF93">
    <property type="entry name" value="VALINE--TRNA LIGASE, CHLOROPLASTIC_MITOCHONDRIAL 2"/>
    <property type="match status" value="1"/>
</dbReference>
<dbReference type="PANTHER" id="PTHR11946">
    <property type="entry name" value="VALYL-TRNA SYNTHETASES"/>
    <property type="match status" value="1"/>
</dbReference>
<dbReference type="Pfam" id="PF08264">
    <property type="entry name" value="Anticodon_1"/>
    <property type="match status" value="1"/>
</dbReference>
<dbReference type="Pfam" id="PF00133">
    <property type="entry name" value="tRNA-synt_1"/>
    <property type="match status" value="1"/>
</dbReference>
<dbReference type="PRINTS" id="PR00986">
    <property type="entry name" value="TRNASYNTHVAL"/>
</dbReference>
<dbReference type="SUPFAM" id="SSF47323">
    <property type="entry name" value="Anticodon-binding domain of a subclass of class I aminoacyl-tRNA synthetases"/>
    <property type="match status" value="1"/>
</dbReference>
<dbReference type="SUPFAM" id="SSF52374">
    <property type="entry name" value="Nucleotidylyl transferase"/>
    <property type="match status" value="1"/>
</dbReference>
<dbReference type="SUPFAM" id="SSF50677">
    <property type="entry name" value="ValRS/IleRS/LeuRS editing domain"/>
    <property type="match status" value="1"/>
</dbReference>
<dbReference type="PROSITE" id="PS00178">
    <property type="entry name" value="AA_TRNA_LIGASE_I"/>
    <property type="match status" value="1"/>
</dbReference>